<accession>C5CQK5</accession>
<reference key="1">
    <citation type="journal article" date="2011" name="J. Bacteriol.">
        <title>Complete genome sequence of the metabolically versatile plant growth-promoting endophyte, Variovorax paradoxus S110.</title>
        <authorList>
            <person name="Han J.I."/>
            <person name="Choi H.K."/>
            <person name="Lee S.W."/>
            <person name="Orwin P.M."/>
            <person name="Kim J."/>
            <person name="Laroe S.L."/>
            <person name="Kim T.G."/>
            <person name="O'Neil J."/>
            <person name="Leadbetter J.R."/>
            <person name="Lee S.Y."/>
            <person name="Hur C.G."/>
            <person name="Spain J.C."/>
            <person name="Ovchinnikova G."/>
            <person name="Goodwin L."/>
            <person name="Han C."/>
        </authorList>
    </citation>
    <scope>NUCLEOTIDE SEQUENCE [LARGE SCALE GENOMIC DNA]</scope>
    <source>
        <strain>S110</strain>
    </source>
</reference>
<dbReference type="EMBL" id="CP001635">
    <property type="protein sequence ID" value="ACS17831.1"/>
    <property type="molecule type" value="Genomic_DNA"/>
</dbReference>
<dbReference type="SMR" id="C5CQK5"/>
<dbReference type="STRING" id="543728.Vapar_1180"/>
<dbReference type="KEGG" id="vap:Vapar_1180"/>
<dbReference type="eggNOG" id="COG1826">
    <property type="taxonomic scope" value="Bacteria"/>
</dbReference>
<dbReference type="HOGENOM" id="CLU_086034_5_1_4"/>
<dbReference type="OrthoDB" id="7066617at2"/>
<dbReference type="GO" id="GO:0033281">
    <property type="term" value="C:TAT protein transport complex"/>
    <property type="evidence" value="ECO:0007669"/>
    <property type="project" value="UniProtKB-UniRule"/>
</dbReference>
<dbReference type="GO" id="GO:0008320">
    <property type="term" value="F:protein transmembrane transporter activity"/>
    <property type="evidence" value="ECO:0007669"/>
    <property type="project" value="UniProtKB-UniRule"/>
</dbReference>
<dbReference type="GO" id="GO:0043953">
    <property type="term" value="P:protein transport by the Tat complex"/>
    <property type="evidence" value="ECO:0007669"/>
    <property type="project" value="UniProtKB-UniRule"/>
</dbReference>
<dbReference type="Gene3D" id="1.20.5.3310">
    <property type="match status" value="1"/>
</dbReference>
<dbReference type="HAMAP" id="MF_00236">
    <property type="entry name" value="TatA_E"/>
    <property type="match status" value="1"/>
</dbReference>
<dbReference type="InterPro" id="IPR003369">
    <property type="entry name" value="TatA/B/E"/>
</dbReference>
<dbReference type="InterPro" id="IPR006312">
    <property type="entry name" value="TatA/E"/>
</dbReference>
<dbReference type="NCBIfam" id="NF002813">
    <property type="entry name" value="PRK02958.1"/>
    <property type="match status" value="1"/>
</dbReference>
<dbReference type="NCBIfam" id="TIGR01411">
    <property type="entry name" value="tatAE"/>
    <property type="match status" value="1"/>
</dbReference>
<dbReference type="PANTHER" id="PTHR42982">
    <property type="entry name" value="SEC-INDEPENDENT PROTEIN TRANSLOCASE PROTEIN TATA"/>
    <property type="match status" value="1"/>
</dbReference>
<dbReference type="PANTHER" id="PTHR42982:SF1">
    <property type="entry name" value="SEC-INDEPENDENT PROTEIN TRANSLOCASE PROTEIN TATA"/>
    <property type="match status" value="1"/>
</dbReference>
<dbReference type="Pfam" id="PF02416">
    <property type="entry name" value="TatA_B_E"/>
    <property type="match status" value="1"/>
</dbReference>
<keyword id="KW-0997">Cell inner membrane</keyword>
<keyword id="KW-1003">Cell membrane</keyword>
<keyword id="KW-0472">Membrane</keyword>
<keyword id="KW-0653">Protein transport</keyword>
<keyword id="KW-0811">Translocation</keyword>
<keyword id="KW-0812">Transmembrane</keyword>
<keyword id="KW-1133">Transmembrane helix</keyword>
<keyword id="KW-0813">Transport</keyword>
<feature type="chain" id="PRO_1000204444" description="Sec-independent protein translocase protein TatA">
    <location>
        <begin position="1"/>
        <end position="82"/>
    </location>
</feature>
<feature type="transmembrane region" description="Helical" evidence="1">
    <location>
        <begin position="1"/>
        <end position="21"/>
    </location>
</feature>
<feature type="region of interest" description="Disordered" evidence="2">
    <location>
        <begin position="39"/>
        <end position="82"/>
    </location>
</feature>
<feature type="compositionally biased region" description="Low complexity" evidence="2">
    <location>
        <begin position="51"/>
        <end position="60"/>
    </location>
</feature>
<feature type="compositionally biased region" description="Polar residues" evidence="2">
    <location>
        <begin position="62"/>
        <end position="71"/>
    </location>
</feature>
<feature type="compositionally biased region" description="Basic and acidic residues" evidence="2">
    <location>
        <begin position="72"/>
        <end position="82"/>
    </location>
</feature>
<comment type="function">
    <text evidence="1">Part of the twin-arginine translocation (Tat) system that transports large folded proteins containing a characteristic twin-arginine motif in their signal peptide across membranes. TatA could form the protein-conducting channel of the Tat system.</text>
</comment>
<comment type="subunit">
    <text evidence="1">The Tat system comprises two distinct complexes: a TatABC complex, containing multiple copies of TatA, TatB and TatC subunits, and a separate TatA complex, containing only TatA subunits. Substrates initially bind to the TatABC complex, which probably triggers association of the separate TatA complex to form the active translocon.</text>
</comment>
<comment type="subcellular location">
    <subcellularLocation>
        <location evidence="1">Cell inner membrane</location>
        <topology evidence="1">Single-pass membrane protein</topology>
    </subcellularLocation>
</comment>
<comment type="similarity">
    <text evidence="1">Belongs to the TatA/E family.</text>
</comment>
<organism>
    <name type="scientific">Variovorax paradoxus (strain S110)</name>
    <dbReference type="NCBI Taxonomy" id="543728"/>
    <lineage>
        <taxon>Bacteria</taxon>
        <taxon>Pseudomonadati</taxon>
        <taxon>Pseudomonadota</taxon>
        <taxon>Betaproteobacteria</taxon>
        <taxon>Burkholderiales</taxon>
        <taxon>Comamonadaceae</taxon>
        <taxon>Variovorax</taxon>
    </lineage>
</organism>
<name>TATA_VARPS</name>
<sequence length="82" mass="8582">MGSFSIWHWLIVLLVVVMIFGTKKLRNMGSDLGGAVKGFKDGMKDGSTTDAPAASSAPAAQVTGQPANSDKSTIDVEARQKS</sequence>
<proteinExistence type="inferred from homology"/>
<evidence type="ECO:0000255" key="1">
    <source>
        <dbReference type="HAMAP-Rule" id="MF_00236"/>
    </source>
</evidence>
<evidence type="ECO:0000256" key="2">
    <source>
        <dbReference type="SAM" id="MobiDB-lite"/>
    </source>
</evidence>
<gene>
    <name evidence="1" type="primary">tatA</name>
    <name type="ordered locus">Vapar_1180</name>
</gene>
<protein>
    <recommendedName>
        <fullName evidence="1">Sec-independent protein translocase protein TatA</fullName>
    </recommendedName>
</protein>